<name>RPOB_PELHO</name>
<protein>
    <recommendedName>
        <fullName evidence="1">DNA-directed RNA polymerase subunit beta</fullName>
        <ecNumber evidence="1">2.7.7.6</ecNumber>
    </recommendedName>
    <alternativeName>
        <fullName evidence="1">PEP</fullName>
    </alternativeName>
    <alternativeName>
        <fullName evidence="1">Plastid-encoded RNA polymerase subunit beta</fullName>
        <shortName evidence="1">RNA polymerase subunit beta</shortName>
    </alternativeName>
</protein>
<comment type="function">
    <text evidence="1">DNA-dependent RNA polymerase catalyzes the transcription of DNA into RNA using the four ribonucleoside triphosphates as substrates.</text>
</comment>
<comment type="catalytic activity">
    <reaction evidence="1">
        <text>RNA(n) + a ribonucleoside 5'-triphosphate = RNA(n+1) + diphosphate</text>
        <dbReference type="Rhea" id="RHEA:21248"/>
        <dbReference type="Rhea" id="RHEA-COMP:14527"/>
        <dbReference type="Rhea" id="RHEA-COMP:17342"/>
        <dbReference type="ChEBI" id="CHEBI:33019"/>
        <dbReference type="ChEBI" id="CHEBI:61557"/>
        <dbReference type="ChEBI" id="CHEBI:140395"/>
        <dbReference type="EC" id="2.7.7.6"/>
    </reaction>
</comment>
<comment type="subunit">
    <text evidence="1">In plastids the minimal PEP RNA polymerase catalytic core is composed of four subunits: alpha, beta, beta', and beta''. When a (nuclear-encoded) sigma factor is associated with the core the holoenzyme is formed, which can initiate transcription.</text>
</comment>
<comment type="subcellular location">
    <subcellularLocation>
        <location>Plastid</location>
        <location>Chloroplast</location>
    </subcellularLocation>
</comment>
<comment type="similarity">
    <text evidence="1">Belongs to the RNA polymerase beta chain family.</text>
</comment>
<geneLocation type="chloroplast"/>
<accession>Q06FW9</accession>
<dbReference type="EC" id="2.7.7.6" evidence="1"/>
<dbReference type="EMBL" id="DQ897681">
    <property type="protein sequence ID" value="ABI17253.1"/>
    <property type="molecule type" value="Genomic_DNA"/>
</dbReference>
<dbReference type="RefSeq" id="YP_784062.1">
    <property type="nucleotide sequence ID" value="NC_008454.1"/>
</dbReference>
<dbReference type="SMR" id="Q06FW9"/>
<dbReference type="GeneID" id="4362772"/>
<dbReference type="GO" id="GO:0009507">
    <property type="term" value="C:chloroplast"/>
    <property type="evidence" value="ECO:0007669"/>
    <property type="project" value="UniProtKB-SubCell"/>
</dbReference>
<dbReference type="GO" id="GO:0000428">
    <property type="term" value="C:DNA-directed RNA polymerase complex"/>
    <property type="evidence" value="ECO:0007669"/>
    <property type="project" value="UniProtKB-KW"/>
</dbReference>
<dbReference type="GO" id="GO:0005739">
    <property type="term" value="C:mitochondrion"/>
    <property type="evidence" value="ECO:0007669"/>
    <property type="project" value="GOC"/>
</dbReference>
<dbReference type="GO" id="GO:0003677">
    <property type="term" value="F:DNA binding"/>
    <property type="evidence" value="ECO:0007669"/>
    <property type="project" value="UniProtKB-UniRule"/>
</dbReference>
<dbReference type="GO" id="GO:0003899">
    <property type="term" value="F:DNA-directed RNA polymerase activity"/>
    <property type="evidence" value="ECO:0007669"/>
    <property type="project" value="UniProtKB-UniRule"/>
</dbReference>
<dbReference type="GO" id="GO:0032549">
    <property type="term" value="F:ribonucleoside binding"/>
    <property type="evidence" value="ECO:0007669"/>
    <property type="project" value="InterPro"/>
</dbReference>
<dbReference type="GO" id="GO:0006351">
    <property type="term" value="P:DNA-templated transcription"/>
    <property type="evidence" value="ECO:0007669"/>
    <property type="project" value="UniProtKB-UniRule"/>
</dbReference>
<dbReference type="CDD" id="cd00653">
    <property type="entry name" value="RNA_pol_B_RPB2"/>
    <property type="match status" value="1"/>
</dbReference>
<dbReference type="Gene3D" id="2.40.50.100">
    <property type="match status" value="1"/>
</dbReference>
<dbReference type="Gene3D" id="2.40.50.150">
    <property type="match status" value="1"/>
</dbReference>
<dbReference type="Gene3D" id="3.90.1100.10">
    <property type="match status" value="1"/>
</dbReference>
<dbReference type="Gene3D" id="2.30.150.10">
    <property type="entry name" value="DNA-directed RNA polymerase, beta subunit, external 1 domain"/>
    <property type="match status" value="1"/>
</dbReference>
<dbReference type="Gene3D" id="2.40.270.10">
    <property type="entry name" value="DNA-directed RNA polymerase, subunit 2, domain 6"/>
    <property type="match status" value="1"/>
</dbReference>
<dbReference type="Gene3D" id="3.90.1800.10">
    <property type="entry name" value="RNA polymerase alpha subunit dimerisation domain"/>
    <property type="match status" value="1"/>
</dbReference>
<dbReference type="Gene3D" id="3.90.1110.10">
    <property type="entry name" value="RNA polymerase Rpb2, domain 2"/>
    <property type="match status" value="1"/>
</dbReference>
<dbReference type="HAMAP" id="MF_01321">
    <property type="entry name" value="RNApol_bact_RpoB"/>
    <property type="match status" value="1"/>
</dbReference>
<dbReference type="InterPro" id="IPR042107">
    <property type="entry name" value="DNA-dir_RNA_pol_bsu_ext_1_sf"/>
</dbReference>
<dbReference type="InterPro" id="IPR015712">
    <property type="entry name" value="DNA-dir_RNA_pol_su2"/>
</dbReference>
<dbReference type="InterPro" id="IPR007120">
    <property type="entry name" value="DNA-dir_RNAP_su2_dom"/>
</dbReference>
<dbReference type="InterPro" id="IPR037033">
    <property type="entry name" value="DNA-dir_RNAP_su2_hyb_sf"/>
</dbReference>
<dbReference type="InterPro" id="IPR010243">
    <property type="entry name" value="RNA_pol_bsu_bac"/>
</dbReference>
<dbReference type="InterPro" id="IPR007121">
    <property type="entry name" value="RNA_pol_bsu_CS"/>
</dbReference>
<dbReference type="InterPro" id="IPR007644">
    <property type="entry name" value="RNA_pol_bsu_protrusion"/>
</dbReference>
<dbReference type="InterPro" id="IPR007642">
    <property type="entry name" value="RNA_pol_Rpb2_2"/>
</dbReference>
<dbReference type="InterPro" id="IPR037034">
    <property type="entry name" value="RNA_pol_Rpb2_2_sf"/>
</dbReference>
<dbReference type="InterPro" id="IPR007645">
    <property type="entry name" value="RNA_pol_Rpb2_3"/>
</dbReference>
<dbReference type="InterPro" id="IPR007641">
    <property type="entry name" value="RNA_pol_Rpb2_7"/>
</dbReference>
<dbReference type="InterPro" id="IPR014724">
    <property type="entry name" value="RNA_pol_RPB2_OB-fold"/>
</dbReference>
<dbReference type="NCBIfam" id="NF001616">
    <property type="entry name" value="PRK00405.1"/>
    <property type="match status" value="1"/>
</dbReference>
<dbReference type="PANTHER" id="PTHR20856">
    <property type="entry name" value="DNA-DIRECTED RNA POLYMERASE I SUBUNIT 2"/>
    <property type="match status" value="1"/>
</dbReference>
<dbReference type="Pfam" id="PF04563">
    <property type="entry name" value="RNA_pol_Rpb2_1"/>
    <property type="match status" value="1"/>
</dbReference>
<dbReference type="Pfam" id="PF04561">
    <property type="entry name" value="RNA_pol_Rpb2_2"/>
    <property type="match status" value="1"/>
</dbReference>
<dbReference type="Pfam" id="PF04565">
    <property type="entry name" value="RNA_pol_Rpb2_3"/>
    <property type="match status" value="1"/>
</dbReference>
<dbReference type="Pfam" id="PF00562">
    <property type="entry name" value="RNA_pol_Rpb2_6"/>
    <property type="match status" value="1"/>
</dbReference>
<dbReference type="Pfam" id="PF04560">
    <property type="entry name" value="RNA_pol_Rpb2_7"/>
    <property type="match status" value="1"/>
</dbReference>
<dbReference type="SUPFAM" id="SSF64484">
    <property type="entry name" value="beta and beta-prime subunits of DNA dependent RNA-polymerase"/>
    <property type="match status" value="1"/>
</dbReference>
<dbReference type="PROSITE" id="PS01166">
    <property type="entry name" value="RNA_POL_BETA"/>
    <property type="match status" value="1"/>
</dbReference>
<proteinExistence type="inferred from homology"/>
<keyword id="KW-0150">Chloroplast</keyword>
<keyword id="KW-0240">DNA-directed RNA polymerase</keyword>
<keyword id="KW-0548">Nucleotidyltransferase</keyword>
<keyword id="KW-0934">Plastid</keyword>
<keyword id="KW-0804">Transcription</keyword>
<keyword id="KW-0808">Transferase</keyword>
<organism>
    <name type="scientific">Pelargonium hortorum</name>
    <name type="common">Common geranium</name>
    <name type="synonym">Pelargonium inquinans x Pelargonium zonale</name>
    <dbReference type="NCBI Taxonomy" id="4031"/>
    <lineage>
        <taxon>Eukaryota</taxon>
        <taxon>Viridiplantae</taxon>
        <taxon>Streptophyta</taxon>
        <taxon>Embryophyta</taxon>
        <taxon>Tracheophyta</taxon>
        <taxon>Spermatophyta</taxon>
        <taxon>Magnoliopsida</taxon>
        <taxon>eudicotyledons</taxon>
        <taxon>Gunneridae</taxon>
        <taxon>Pentapetalae</taxon>
        <taxon>rosids</taxon>
        <taxon>malvids</taxon>
        <taxon>Geraniales</taxon>
        <taxon>Geraniaceae</taxon>
        <taxon>Pelargonium</taxon>
    </lineage>
</organism>
<feature type="chain" id="PRO_0000276594" description="DNA-directed RNA polymerase subunit beta">
    <location>
        <begin position="1"/>
        <end position="1079"/>
    </location>
</feature>
<feature type="region of interest" description="Disordered" evidence="2">
    <location>
        <begin position="963"/>
        <end position="982"/>
    </location>
</feature>
<feature type="compositionally biased region" description="Polar residues" evidence="2">
    <location>
        <begin position="966"/>
        <end position="975"/>
    </location>
</feature>
<gene>
    <name evidence="1" type="primary">rpoB</name>
</gene>
<sequence>MLGDRNEGMATIPALNQIQFEGFCRFLDQGLIEELSQFPKGNSFLEYFRDEEIDFQLFSKTYHLVKPLIKERDARYESLTYSSKLYVSAGFLWKDKRPQKKTICIGNLPLMNSVGTFIVNGISRVVINQILQSPGIYYGSELDYQGFTVYIATIISDWGGRLKLEIDKKERIWARVSRKQKISILVLSSAMGSNLKEILENACYPEIFLALNLKKECGFKEKKYAILELYAKYKDFTEYKDSLDFDFLCETLRKTFFSHKCELGRVGRQNINRRLNLDISHKNTFLLPQDILAATNHLIGMKFGMGTLDDMNHLKNKRIRSVADLLQDQFGLALNRLEDAVCDTIGRAIAKDKIPTLRHLATSTPLTTTYESFFKLHPLSHVFDETNPLTHIVHGRKWSFLGPGGLTERTARFRVRDIHPSNYGRICPIDTSEGIKVGLIGYLATHARIGDCGSLESPFYEMSEKSKRVRMLSLSSRKEEYYMIGTGNSLALNQGIQEEQIIPARYRQEFLTIAWEEVHFRSVFPFQYFSIGVSLIPFLEHNDATRALMSSNMQRQAVPLSRSEKCIVGTGFEGQVALDSGIPLITEHAGKIISTHTDKILLSVNGETLSSPLVLFQRSNKNTWIHQTPQVSRGNCTKKGQILADGAATVGGELALGKNVLVGYMPWEGYNFEDAVLISERLVYEDIYTSFHIRKCEIKIFMTMKGPEKITNQIPHIDPHLLRNLDKNGVVILGSWVEAGDILVGKLTPELVELSPEKRLIEALFDAPIGTTRQSCLKLPIWGRGRVIDVRWIHKGSASRSNPERIRVYILQKRKIKVGDKVAGRHGNKGIVSKILPIQDMPYLQDGRPLDMVFNPLGVPSRMNVGQIFECSLGLAGGLLDRHYRIAPFDERYEEEASRKLVFSELYEASKQTGNPWVFEPEYPGKSIIFDGRTGDPFEQPVIVGQSYILKLIHQVDDKIHGRSTGPYSRVTQQPVKGRARRGGQRVGEMEVWALQGLGVAHILEEILTYKSDHLTTRNQIFGTLLLGGALPKPEPEDRPESFRLLVRELRSLSLELNYFLVSKNKKNFNFWKMNRVEV</sequence>
<reference key="1">
    <citation type="journal article" date="2006" name="Mol. Biol. Evol.">
        <title>The complete chloroplast genome sequence of Pelargonium x hortorum: organization and evolution of the largest and most highly rearranged chloroplast genome of land plants.</title>
        <authorList>
            <person name="Chumley T.W."/>
            <person name="Palmer J.D."/>
            <person name="Mower J.P."/>
            <person name="Fourcade H.M."/>
            <person name="Calie P.J."/>
            <person name="Boore J.L."/>
            <person name="Jansen R.K."/>
        </authorList>
    </citation>
    <scope>NUCLEOTIDE SEQUENCE [LARGE SCALE GENOMIC DNA]</scope>
    <source>
        <strain>cv. Ringo White</strain>
    </source>
</reference>
<evidence type="ECO:0000255" key="1">
    <source>
        <dbReference type="HAMAP-Rule" id="MF_01321"/>
    </source>
</evidence>
<evidence type="ECO:0000256" key="2">
    <source>
        <dbReference type="SAM" id="MobiDB-lite"/>
    </source>
</evidence>